<keyword id="KW-0325">Glycoprotein</keyword>
<keyword id="KW-0326">Glycosidase</keyword>
<keyword id="KW-0378">Hydrolase</keyword>
<keyword id="KW-0732">Signal</keyword>
<comment type="catalytic activity">
    <reaction>
        <text>Hydrolysis of terminal, non-reducing (1-&gt;4)-linked alpha-D-glucose residues with release of alpha-D-glucose.</text>
        <dbReference type="EC" id="3.2.1.20"/>
    </reaction>
</comment>
<comment type="tissue specificity">
    <text>High levels seen in the aleurone and scutellum after germination, while low levels are found in developing seeds.</text>
</comment>
<comment type="developmental stage">
    <text>Levels increase steadily throughout imbibition reaching maximum levels at day 7. During germination, levels increase from day 2, reach maximum levels at day 3 and decline after day 5.</text>
</comment>
<comment type="induction">
    <text>By gibberellin A3 (GA).</text>
</comment>
<comment type="similarity">
    <text evidence="4">Belongs to the glycosyl hydrolase 31 family.</text>
</comment>
<dbReference type="EC" id="3.2.1.20"/>
<dbReference type="EMBL" id="U22450">
    <property type="protein sequence ID" value="AAB02985.1"/>
    <property type="molecule type" value="mRNA"/>
</dbReference>
<dbReference type="PIR" id="S65057">
    <property type="entry name" value="S65057"/>
</dbReference>
<dbReference type="SMR" id="Q43763"/>
<dbReference type="CAZy" id="GH31">
    <property type="family name" value="Glycoside Hydrolase Family 31"/>
</dbReference>
<dbReference type="BRENDA" id="3.2.1.20">
    <property type="organism ID" value="2687"/>
</dbReference>
<dbReference type="ExpressionAtlas" id="Q43763">
    <property type="expression patterns" value="baseline and differential"/>
</dbReference>
<dbReference type="GO" id="GO:0004558">
    <property type="term" value="F:alpha-1,4-glucosidase activity"/>
    <property type="evidence" value="ECO:0007669"/>
    <property type="project" value="UniProtKB-EC"/>
</dbReference>
<dbReference type="GO" id="GO:0030246">
    <property type="term" value="F:carbohydrate binding"/>
    <property type="evidence" value="ECO:0007669"/>
    <property type="project" value="InterPro"/>
</dbReference>
<dbReference type="GO" id="GO:0000272">
    <property type="term" value="P:polysaccharide catabolic process"/>
    <property type="evidence" value="ECO:0007669"/>
    <property type="project" value="UniProtKB-ARBA"/>
</dbReference>
<dbReference type="CDD" id="cd06602">
    <property type="entry name" value="GH31_MGAM_SI_GAA"/>
    <property type="match status" value="1"/>
</dbReference>
<dbReference type="CDD" id="cd14752">
    <property type="entry name" value="GH31_N"/>
    <property type="match status" value="1"/>
</dbReference>
<dbReference type="FunFam" id="2.60.40.1180:FF:000044">
    <property type="entry name" value="Alpha-glucosidase 1"/>
    <property type="match status" value="1"/>
</dbReference>
<dbReference type="Gene3D" id="3.20.20.80">
    <property type="entry name" value="Glycosidases"/>
    <property type="match status" value="1"/>
</dbReference>
<dbReference type="Gene3D" id="2.60.40.1760">
    <property type="entry name" value="glycosyl hydrolase (family 31)"/>
    <property type="match status" value="1"/>
</dbReference>
<dbReference type="Gene3D" id="2.60.40.1180">
    <property type="entry name" value="Golgi alpha-mannosidase II"/>
    <property type="match status" value="2"/>
</dbReference>
<dbReference type="InterPro" id="IPR011013">
    <property type="entry name" value="Gal_mutarotase_sf_dom"/>
</dbReference>
<dbReference type="InterPro" id="IPR030458">
    <property type="entry name" value="Glyco_hydro_31_AS"/>
</dbReference>
<dbReference type="InterPro" id="IPR048395">
    <property type="entry name" value="Glyco_hydro_31_C"/>
</dbReference>
<dbReference type="InterPro" id="IPR030459">
    <property type="entry name" value="Glyco_hydro_31_CS"/>
</dbReference>
<dbReference type="InterPro" id="IPR025887">
    <property type="entry name" value="Glyco_hydro_31_N_dom"/>
</dbReference>
<dbReference type="InterPro" id="IPR000322">
    <property type="entry name" value="Glyco_hydro_31_TIM"/>
</dbReference>
<dbReference type="InterPro" id="IPR013780">
    <property type="entry name" value="Glyco_hydro_b"/>
</dbReference>
<dbReference type="InterPro" id="IPR017853">
    <property type="entry name" value="Glycoside_hydrolase_SF"/>
</dbReference>
<dbReference type="PANTHER" id="PTHR22762">
    <property type="entry name" value="ALPHA-GLUCOSIDASE"/>
    <property type="match status" value="1"/>
</dbReference>
<dbReference type="PANTHER" id="PTHR22762:SF133">
    <property type="entry name" value="P-TYPE DOMAIN-CONTAINING PROTEIN"/>
    <property type="match status" value="1"/>
</dbReference>
<dbReference type="Pfam" id="PF13802">
    <property type="entry name" value="Gal_mutarotas_2"/>
    <property type="match status" value="1"/>
</dbReference>
<dbReference type="Pfam" id="PF01055">
    <property type="entry name" value="Glyco_hydro_31_2nd"/>
    <property type="match status" value="1"/>
</dbReference>
<dbReference type="Pfam" id="PF21365">
    <property type="entry name" value="Glyco_hydro_31_3rd"/>
    <property type="match status" value="1"/>
</dbReference>
<dbReference type="SUPFAM" id="SSF51445">
    <property type="entry name" value="(Trans)glycosidases"/>
    <property type="match status" value="1"/>
</dbReference>
<dbReference type="SUPFAM" id="SSF74650">
    <property type="entry name" value="Galactose mutarotase-like"/>
    <property type="match status" value="1"/>
</dbReference>
<dbReference type="SUPFAM" id="SSF51011">
    <property type="entry name" value="Glycosyl hydrolase domain"/>
    <property type="match status" value="1"/>
</dbReference>
<dbReference type="PROSITE" id="PS00129">
    <property type="entry name" value="GLYCOSYL_HYDROL_F31_1"/>
    <property type="match status" value="1"/>
</dbReference>
<dbReference type="PROSITE" id="PS00707">
    <property type="entry name" value="GLYCOSYL_HYDROL_F31_2"/>
    <property type="match status" value="1"/>
</dbReference>
<organism>
    <name type="scientific">Hordeum vulgare</name>
    <name type="common">Barley</name>
    <dbReference type="NCBI Taxonomy" id="4513"/>
    <lineage>
        <taxon>Eukaryota</taxon>
        <taxon>Viridiplantae</taxon>
        <taxon>Streptophyta</taxon>
        <taxon>Embryophyta</taxon>
        <taxon>Tracheophyta</taxon>
        <taxon>Spermatophyta</taxon>
        <taxon>Magnoliopsida</taxon>
        <taxon>Liliopsida</taxon>
        <taxon>Poales</taxon>
        <taxon>Poaceae</taxon>
        <taxon>BOP clade</taxon>
        <taxon>Pooideae</taxon>
        <taxon>Triticodae</taxon>
        <taxon>Triticeae</taxon>
        <taxon>Hordeinae</taxon>
        <taxon>Hordeum</taxon>
    </lineage>
</organism>
<feature type="signal peptide" evidence="2">
    <location>
        <begin position="1"/>
        <end position="23"/>
    </location>
</feature>
<feature type="chain" id="PRO_0000018583" description="Alpha-glucosidase">
    <location>
        <begin position="24"/>
        <end position="877"/>
    </location>
</feature>
<feature type="region of interest" description="Disordered" evidence="3">
    <location>
        <begin position="89"/>
        <end position="115"/>
    </location>
</feature>
<feature type="active site" evidence="1">
    <location>
        <position position="437"/>
    </location>
</feature>
<feature type="active site" evidence="1">
    <location>
        <position position="440"/>
    </location>
</feature>
<feature type="active site" description="Proton donor" evidence="1">
    <location>
        <position position="534"/>
    </location>
</feature>
<feature type="glycosylation site" description="N-linked (GlcNAc...) asparagine" evidence="2">
    <location>
        <position position="191"/>
    </location>
</feature>
<feature type="glycosylation site" description="N-linked (GlcNAc...) asparagine" evidence="2">
    <location>
        <position position="298"/>
    </location>
</feature>
<feature type="glycosylation site" description="N-linked (GlcNAc...) asparagine" evidence="2">
    <location>
        <position position="338"/>
    </location>
</feature>
<feature type="glycosylation site" description="N-linked (GlcNAc...) asparagine" evidence="2">
    <location>
        <position position="391"/>
    </location>
</feature>
<feature type="glycosylation site" description="N-linked (GlcNAc...) asparagine" evidence="2">
    <location>
        <position position="471"/>
    </location>
</feature>
<feature type="glycosylation site" description="N-linked (GlcNAc...) asparagine" evidence="2">
    <location>
        <position position="570"/>
    </location>
</feature>
<reference key="1">
    <citation type="journal article" date="1996" name="Plant Mol. Biol.">
        <title>Molecular cloning and characterization of a gibberellin-inducible, putative alpha-glucosidase gene from barley.</title>
        <authorList>
            <person name="Tibbot B.K."/>
            <person name="Skadsen R.W."/>
        </authorList>
    </citation>
    <scope>NUCLEOTIDE SEQUENCE [MRNA]</scope>
    <source>
        <strain>cv. Morex</strain>
        <tissue>Aleurone</tissue>
    </source>
</reference>
<protein>
    <recommendedName>
        <fullName>Alpha-glucosidase</fullName>
        <ecNumber>3.2.1.20</ecNumber>
    </recommendedName>
    <alternativeName>
        <fullName>Maltase</fullName>
    </alternativeName>
</protein>
<proteinExistence type="evidence at transcript level"/>
<accession>Q43763</accession>
<name>AGLU_HORVU</name>
<sequence length="877" mass="96933">MATVGVLLLCLCLCLFAPRLCSSKEEGPLAARTVLAVAVTMEGALRAEAATGGRSSTGDVQRLAVYASLETDSRLRVRITDADHPRWEVPQDIIPRPAPGDVLHDAPPASSAPLQGRVLSPAGSDLVLTVHASPFRFTVSRRSTGDTLFDTAPGLVFRDKYLEVTSALPAGRASLYGLGEHTKSSFRLRHNDSFTLWNADIGASYVDVNLYGSHPFYMDVRAPGTAHGVLLLSSNGMDVLYGGSYVTYKVIGGVLDFYFFAGPNPLAVVDQYTQLIARPAPMPYWSFGFHQCRYGYLNVSDLERVVARYAKARIPLEVMWTDIDYMDGFKDFTLDRVNFTAAELRPFVDRLHRNAQKYVLILDPGIRVDPIDATYGTFVRGMQQDIFLKRNGTNFVGNVWPGDVYFPDFMHPAAAEFWAREISLFRRTIPVDGLWIDMNEISNFYNPEPMNALDDPPYRINNDGTGRPINNKTVRPLAVHYGGVTEYEEHNLFGLLEARATGRGVLRDTGRRPFVLSRSTFVGSGRYTAYWTGDNAATWGDLRYSINTMLSFGLFGMPMIGADICGFNGNTTEELCGRWIQLGAFYPFSRDHSAIFTVRRELYLWPSVAASGRKALGLRYQLLPYFYTLMYEAHMTGAPIARPLFFSYPHDVATYGVDRQFLLGRGVLVSPVLEPGPTTVDAYFPAGRWYRLYDYSLAVATRTGKHVRLPAPADTVNVHLTGGTILPLQQSALTTSRARRTAFHLLVALAEDGTASGYLFLDDGDSPEYGRRSDWSMVRFNYKIPNNKGAIKVKSEVVHNSYAQSRTLVISKVVLMGHRSPAAPKKLTVHVNSAEVEASSSAGTRYQNAGGLGGVAHIGGLSLVVGEEFELKVAMSY</sequence>
<evidence type="ECO:0000250" key="1"/>
<evidence type="ECO:0000255" key="2"/>
<evidence type="ECO:0000256" key="3">
    <source>
        <dbReference type="SAM" id="MobiDB-lite"/>
    </source>
</evidence>
<evidence type="ECO:0000305" key="4"/>